<name>SYH_SALEP</name>
<evidence type="ECO:0000255" key="1">
    <source>
        <dbReference type="HAMAP-Rule" id="MF_00127"/>
    </source>
</evidence>
<dbReference type="EC" id="6.1.1.21" evidence="1"/>
<dbReference type="EMBL" id="AM933172">
    <property type="protein sequence ID" value="CAR34085.1"/>
    <property type="molecule type" value="Genomic_DNA"/>
</dbReference>
<dbReference type="RefSeq" id="WP_001107146.1">
    <property type="nucleotide sequence ID" value="NC_011294.1"/>
</dbReference>
<dbReference type="SMR" id="B5R581"/>
<dbReference type="KEGG" id="set:SEN2502"/>
<dbReference type="HOGENOM" id="CLU_025113_1_1_6"/>
<dbReference type="Proteomes" id="UP000000613">
    <property type="component" value="Chromosome"/>
</dbReference>
<dbReference type="GO" id="GO:0005737">
    <property type="term" value="C:cytoplasm"/>
    <property type="evidence" value="ECO:0007669"/>
    <property type="project" value="UniProtKB-SubCell"/>
</dbReference>
<dbReference type="GO" id="GO:0005524">
    <property type="term" value="F:ATP binding"/>
    <property type="evidence" value="ECO:0007669"/>
    <property type="project" value="UniProtKB-UniRule"/>
</dbReference>
<dbReference type="GO" id="GO:0004821">
    <property type="term" value="F:histidine-tRNA ligase activity"/>
    <property type="evidence" value="ECO:0007669"/>
    <property type="project" value="UniProtKB-UniRule"/>
</dbReference>
<dbReference type="GO" id="GO:0006427">
    <property type="term" value="P:histidyl-tRNA aminoacylation"/>
    <property type="evidence" value="ECO:0007669"/>
    <property type="project" value="UniProtKB-UniRule"/>
</dbReference>
<dbReference type="CDD" id="cd00773">
    <property type="entry name" value="HisRS-like_core"/>
    <property type="match status" value="1"/>
</dbReference>
<dbReference type="CDD" id="cd00859">
    <property type="entry name" value="HisRS_anticodon"/>
    <property type="match status" value="1"/>
</dbReference>
<dbReference type="FunFam" id="3.30.930.10:FF:000005">
    <property type="entry name" value="Histidine--tRNA ligase"/>
    <property type="match status" value="1"/>
</dbReference>
<dbReference type="FunFam" id="3.40.50.800:FF:000007">
    <property type="entry name" value="Histidine--tRNA ligase"/>
    <property type="match status" value="1"/>
</dbReference>
<dbReference type="Gene3D" id="3.40.50.800">
    <property type="entry name" value="Anticodon-binding domain"/>
    <property type="match status" value="1"/>
</dbReference>
<dbReference type="Gene3D" id="3.30.930.10">
    <property type="entry name" value="Bira Bifunctional Protein, Domain 2"/>
    <property type="match status" value="1"/>
</dbReference>
<dbReference type="HAMAP" id="MF_00127">
    <property type="entry name" value="His_tRNA_synth"/>
    <property type="match status" value="1"/>
</dbReference>
<dbReference type="InterPro" id="IPR006195">
    <property type="entry name" value="aa-tRNA-synth_II"/>
</dbReference>
<dbReference type="InterPro" id="IPR045864">
    <property type="entry name" value="aa-tRNA-synth_II/BPL/LPL"/>
</dbReference>
<dbReference type="InterPro" id="IPR004154">
    <property type="entry name" value="Anticodon-bd"/>
</dbReference>
<dbReference type="InterPro" id="IPR036621">
    <property type="entry name" value="Anticodon-bd_dom_sf"/>
</dbReference>
<dbReference type="InterPro" id="IPR015807">
    <property type="entry name" value="His-tRNA-ligase"/>
</dbReference>
<dbReference type="InterPro" id="IPR041715">
    <property type="entry name" value="HisRS-like_core"/>
</dbReference>
<dbReference type="InterPro" id="IPR004516">
    <property type="entry name" value="HisRS/HisZ"/>
</dbReference>
<dbReference type="InterPro" id="IPR033656">
    <property type="entry name" value="HisRS_anticodon"/>
</dbReference>
<dbReference type="NCBIfam" id="TIGR00442">
    <property type="entry name" value="hisS"/>
    <property type="match status" value="1"/>
</dbReference>
<dbReference type="PANTHER" id="PTHR43707:SF1">
    <property type="entry name" value="HISTIDINE--TRNA LIGASE, MITOCHONDRIAL-RELATED"/>
    <property type="match status" value="1"/>
</dbReference>
<dbReference type="PANTHER" id="PTHR43707">
    <property type="entry name" value="HISTIDYL-TRNA SYNTHETASE"/>
    <property type="match status" value="1"/>
</dbReference>
<dbReference type="Pfam" id="PF03129">
    <property type="entry name" value="HGTP_anticodon"/>
    <property type="match status" value="1"/>
</dbReference>
<dbReference type="Pfam" id="PF13393">
    <property type="entry name" value="tRNA-synt_His"/>
    <property type="match status" value="1"/>
</dbReference>
<dbReference type="PIRSF" id="PIRSF001549">
    <property type="entry name" value="His-tRNA_synth"/>
    <property type="match status" value="1"/>
</dbReference>
<dbReference type="SUPFAM" id="SSF52954">
    <property type="entry name" value="Class II aaRS ABD-related"/>
    <property type="match status" value="1"/>
</dbReference>
<dbReference type="SUPFAM" id="SSF55681">
    <property type="entry name" value="Class II aaRS and biotin synthetases"/>
    <property type="match status" value="1"/>
</dbReference>
<dbReference type="PROSITE" id="PS50862">
    <property type="entry name" value="AA_TRNA_LIGASE_II"/>
    <property type="match status" value="1"/>
</dbReference>
<organism>
    <name type="scientific">Salmonella enteritidis PT4 (strain P125109)</name>
    <dbReference type="NCBI Taxonomy" id="550537"/>
    <lineage>
        <taxon>Bacteria</taxon>
        <taxon>Pseudomonadati</taxon>
        <taxon>Pseudomonadota</taxon>
        <taxon>Gammaproteobacteria</taxon>
        <taxon>Enterobacterales</taxon>
        <taxon>Enterobacteriaceae</taxon>
        <taxon>Salmonella</taxon>
    </lineage>
</organism>
<accession>B5R581</accession>
<comment type="catalytic activity">
    <reaction evidence="1">
        <text>tRNA(His) + L-histidine + ATP = L-histidyl-tRNA(His) + AMP + diphosphate + H(+)</text>
        <dbReference type="Rhea" id="RHEA:17313"/>
        <dbReference type="Rhea" id="RHEA-COMP:9665"/>
        <dbReference type="Rhea" id="RHEA-COMP:9689"/>
        <dbReference type="ChEBI" id="CHEBI:15378"/>
        <dbReference type="ChEBI" id="CHEBI:30616"/>
        <dbReference type="ChEBI" id="CHEBI:33019"/>
        <dbReference type="ChEBI" id="CHEBI:57595"/>
        <dbReference type="ChEBI" id="CHEBI:78442"/>
        <dbReference type="ChEBI" id="CHEBI:78527"/>
        <dbReference type="ChEBI" id="CHEBI:456215"/>
        <dbReference type="EC" id="6.1.1.21"/>
    </reaction>
</comment>
<comment type="subunit">
    <text evidence="1">Homodimer.</text>
</comment>
<comment type="subcellular location">
    <subcellularLocation>
        <location evidence="1">Cytoplasm</location>
    </subcellularLocation>
</comment>
<comment type="similarity">
    <text evidence="1">Belongs to the class-II aminoacyl-tRNA synthetase family.</text>
</comment>
<reference key="1">
    <citation type="journal article" date="2008" name="Genome Res.">
        <title>Comparative genome analysis of Salmonella enteritidis PT4 and Salmonella gallinarum 287/91 provides insights into evolutionary and host adaptation pathways.</title>
        <authorList>
            <person name="Thomson N.R."/>
            <person name="Clayton D.J."/>
            <person name="Windhorst D."/>
            <person name="Vernikos G."/>
            <person name="Davidson S."/>
            <person name="Churcher C."/>
            <person name="Quail M.A."/>
            <person name="Stevens M."/>
            <person name="Jones M.A."/>
            <person name="Watson M."/>
            <person name="Barron A."/>
            <person name="Layton A."/>
            <person name="Pickard D."/>
            <person name="Kingsley R.A."/>
            <person name="Bignell A."/>
            <person name="Clark L."/>
            <person name="Harris B."/>
            <person name="Ormond D."/>
            <person name="Abdellah Z."/>
            <person name="Brooks K."/>
            <person name="Cherevach I."/>
            <person name="Chillingworth T."/>
            <person name="Woodward J."/>
            <person name="Norberczak H."/>
            <person name="Lord A."/>
            <person name="Arrowsmith C."/>
            <person name="Jagels K."/>
            <person name="Moule S."/>
            <person name="Mungall K."/>
            <person name="Saunders M."/>
            <person name="Whitehead S."/>
            <person name="Chabalgoity J.A."/>
            <person name="Maskell D."/>
            <person name="Humphreys T."/>
            <person name="Roberts M."/>
            <person name="Barrow P.A."/>
            <person name="Dougan G."/>
            <person name="Parkhill J."/>
        </authorList>
    </citation>
    <scope>NUCLEOTIDE SEQUENCE [LARGE SCALE GENOMIC DNA]</scope>
    <source>
        <strain>P125109</strain>
    </source>
</reference>
<protein>
    <recommendedName>
        <fullName evidence="1">Histidine--tRNA ligase</fullName>
        <ecNumber evidence="1">6.1.1.21</ecNumber>
    </recommendedName>
    <alternativeName>
        <fullName evidence="1">Histidyl-tRNA synthetase</fullName>
        <shortName evidence="1">HisRS</shortName>
    </alternativeName>
</protein>
<gene>
    <name evidence="1" type="primary">hisS</name>
    <name type="ordered locus">SEN2502</name>
</gene>
<proteinExistence type="inferred from homology"/>
<keyword id="KW-0030">Aminoacyl-tRNA synthetase</keyword>
<keyword id="KW-0067">ATP-binding</keyword>
<keyword id="KW-0963">Cytoplasm</keyword>
<keyword id="KW-0436">Ligase</keyword>
<keyword id="KW-0547">Nucleotide-binding</keyword>
<keyword id="KW-0648">Protein biosynthesis</keyword>
<feature type="chain" id="PRO_1000095586" description="Histidine--tRNA ligase">
    <location>
        <begin position="1"/>
        <end position="424"/>
    </location>
</feature>
<sequence>MAKNIQAIRGMNDYLPGETAIWQRIEGTLKNVLGSYGYSEIRLPIVEQTPLFKRAIGEVTDVVEKEMYTFEDRNGDSLTLRPEGTAGCVRAGIEHGLLYNQEQRLWYIGPMFRHERPQKGRYRQFHQLGAEVFGLQGPDIDAELIMLTARWWRALGISEHVSLELNSIGSLEARANYRDALVAFLEQHQETLDEDCKRRMYTNPLRVLDSKNPDVQALLNDAPALGDYLDDDSREHFAGLCKLLDAAGIAYTVNQRLVRGLDYYNRTVFEWVTNSLGSQGTVCAGGRYDGLVEQLGGRATPAVGFAMGLERLVLLVQAVNPEFIASPVVDIYLVAAGAQTQSAAMTLAERLRDEMPGVKLMTNHGGGNFKKQFARADKWGARIALVLGESEVADGTVVVKDLRSGEQTAVAQDSVAAHLRTLLG</sequence>